<accession>B1ML30</accession>
<dbReference type="EC" id="2.1.1.-"/>
<dbReference type="EMBL" id="CU458896">
    <property type="protein sequence ID" value="CAM64675.1"/>
    <property type="molecule type" value="Genomic_DNA"/>
</dbReference>
<dbReference type="RefSeq" id="WP_005079748.1">
    <property type="nucleotide sequence ID" value="NZ_MLCG01000001.1"/>
</dbReference>
<dbReference type="SMR" id="B1ML30"/>
<dbReference type="GeneID" id="93381550"/>
<dbReference type="KEGG" id="mab:MAB_4606c"/>
<dbReference type="Proteomes" id="UP000007137">
    <property type="component" value="Chromosome"/>
</dbReference>
<dbReference type="GO" id="GO:0008168">
    <property type="term" value="F:methyltransferase activity"/>
    <property type="evidence" value="ECO:0007669"/>
    <property type="project" value="UniProtKB-KW"/>
</dbReference>
<dbReference type="GO" id="GO:0032259">
    <property type="term" value="P:methylation"/>
    <property type="evidence" value="ECO:0007669"/>
    <property type="project" value="UniProtKB-KW"/>
</dbReference>
<dbReference type="Gene3D" id="3.40.50.150">
    <property type="entry name" value="Vaccinia Virus protein VP39"/>
    <property type="match status" value="1"/>
</dbReference>
<dbReference type="InterPro" id="IPR007213">
    <property type="entry name" value="Ppm1/Ppm2/Tcmp"/>
</dbReference>
<dbReference type="InterPro" id="IPR029063">
    <property type="entry name" value="SAM-dependent_MTases_sf"/>
</dbReference>
<dbReference type="InterPro" id="IPR011610">
    <property type="entry name" value="SAM_mthyl_Trfase_ML2640-like"/>
</dbReference>
<dbReference type="NCBIfam" id="TIGR00027">
    <property type="entry name" value="mthyl_TIGR00027"/>
    <property type="match status" value="1"/>
</dbReference>
<dbReference type="PANTHER" id="PTHR43619">
    <property type="entry name" value="S-ADENOSYL-L-METHIONINE-DEPENDENT METHYLTRANSFERASE YKTD-RELATED"/>
    <property type="match status" value="1"/>
</dbReference>
<dbReference type="PANTHER" id="PTHR43619:SF2">
    <property type="entry name" value="S-ADENOSYL-L-METHIONINE-DEPENDENT METHYLTRANSFERASES SUPERFAMILY PROTEIN"/>
    <property type="match status" value="1"/>
</dbReference>
<dbReference type="Pfam" id="PF04072">
    <property type="entry name" value="LCM"/>
    <property type="match status" value="1"/>
</dbReference>
<dbReference type="SUPFAM" id="SSF53335">
    <property type="entry name" value="S-adenosyl-L-methionine-dependent methyltransferases"/>
    <property type="match status" value="1"/>
</dbReference>
<evidence type="ECO:0000250" key="1"/>
<evidence type="ECO:0000305" key="2"/>
<reference key="1">
    <citation type="journal article" date="2009" name="PLoS ONE">
        <title>Non mycobacterial virulence genes in the genome of the emerging pathogen Mycobacterium abscessus.</title>
        <authorList>
            <person name="Ripoll F."/>
            <person name="Pasek S."/>
            <person name="Schenowitz C."/>
            <person name="Dossat C."/>
            <person name="Barbe V."/>
            <person name="Rottman M."/>
            <person name="Macheras E."/>
            <person name="Heym B."/>
            <person name="Herrmann J.L."/>
            <person name="Daffe M."/>
            <person name="Brosch R."/>
            <person name="Risler J.L."/>
            <person name="Gaillard J.L."/>
        </authorList>
    </citation>
    <scope>NUCLEOTIDE SEQUENCE [LARGE SCALE GENOMIC DNA]</scope>
    <source>
        <strain>ATCC 19977 / DSM 44196 / CCUG 20993 / CIP 104536 / JCM 13569 / NCTC 13031 / TMC 1543 / L948</strain>
    </source>
</reference>
<comment type="function">
    <text evidence="1">Exhibits S-adenosyl-L-methionine-dependent methyltransferase activity.</text>
</comment>
<comment type="similarity">
    <text evidence="2">Belongs to the UPF0677 family.</text>
</comment>
<protein>
    <recommendedName>
        <fullName>Putative S-adenosyl-L-methionine-dependent methyltransferase MAB_4606c</fullName>
        <ecNumber>2.1.1.-</ecNumber>
    </recommendedName>
</protein>
<sequence length="316" mass="34920">MTGTTTARSDDDSWDIASSVGATAVMVAAARAAETRSASPLIQDPFAQLLVERAGSGAWSVLASDGLRQQLAELDPDADRVMQYAVDYQAVRTRFFDGFFERAAHAGITQVVILAAGLDSRAYRLDWPAGTTVYEIDQPLVLQYKRHTLDAHDVRSACLRREVPVDLRQDWPAALQREGFDVAEPTAWLAEGLLMYLPTEAQDRLFELIVDQSAPGSRIAVEAVGPDNDKRQEFRSKMRAHFDRARKLAGMDGESLDVGSLMYHDENRTDVPQWLAGRGWTVRAIPAEVEMAEAGRPGYIEEDLRGNTLIEAELKG</sequence>
<gene>
    <name type="ordered locus">MAB_4606c</name>
</gene>
<keyword id="KW-0489">Methyltransferase</keyword>
<keyword id="KW-1185">Reference proteome</keyword>
<keyword id="KW-0949">S-adenosyl-L-methionine</keyword>
<keyword id="KW-0808">Transferase</keyword>
<organism>
    <name type="scientific">Mycobacteroides abscessus (strain ATCC 19977 / DSM 44196 / CCUG 20993 / CIP 104536 / JCM 13569 / NCTC 13031 / TMC 1543 / L948)</name>
    <name type="common">Mycobacterium abscessus</name>
    <dbReference type="NCBI Taxonomy" id="561007"/>
    <lineage>
        <taxon>Bacteria</taxon>
        <taxon>Bacillati</taxon>
        <taxon>Actinomycetota</taxon>
        <taxon>Actinomycetes</taxon>
        <taxon>Mycobacteriales</taxon>
        <taxon>Mycobacteriaceae</taxon>
        <taxon>Mycobacteroides</taxon>
        <taxon>Mycobacteroides abscessus</taxon>
    </lineage>
</organism>
<name>Y4606_MYCA9</name>
<feature type="chain" id="PRO_0000361128" description="Putative S-adenosyl-L-methionine-dependent methyltransferase MAB_4606c">
    <location>
        <begin position="1"/>
        <end position="316"/>
    </location>
</feature>
<feature type="binding site" evidence="1">
    <location>
        <position position="137"/>
    </location>
    <ligand>
        <name>S-adenosyl-L-methionine</name>
        <dbReference type="ChEBI" id="CHEBI:59789"/>
    </ligand>
</feature>
<feature type="binding site" evidence="1">
    <location>
        <begin position="166"/>
        <end position="167"/>
    </location>
    <ligand>
        <name>S-adenosyl-L-methionine</name>
        <dbReference type="ChEBI" id="CHEBI:59789"/>
    </ligand>
</feature>
<proteinExistence type="inferred from homology"/>